<proteinExistence type="inferred from homology"/>
<reference key="1">
    <citation type="submission" date="2005-10" db="EMBL/GenBank/DDBJ databases">
        <title>Complete sequence of Pelobacter carbinolicus DSM 2380.</title>
        <authorList>
            <person name="Copeland A."/>
            <person name="Lucas S."/>
            <person name="Lapidus A."/>
            <person name="Barry K."/>
            <person name="Detter J.C."/>
            <person name="Glavina T."/>
            <person name="Hammon N."/>
            <person name="Israni S."/>
            <person name="Pitluck S."/>
            <person name="Chertkov O."/>
            <person name="Schmutz J."/>
            <person name="Larimer F."/>
            <person name="Land M."/>
            <person name="Kyrpides N."/>
            <person name="Ivanova N."/>
            <person name="Richardson P."/>
        </authorList>
    </citation>
    <scope>NUCLEOTIDE SEQUENCE [LARGE SCALE GENOMIC DNA]</scope>
    <source>
        <strain>DSM 2380 / NBRC 103641 / GraBd1</strain>
    </source>
</reference>
<name>RL30_SYNC1</name>
<comment type="subunit">
    <text evidence="1">Part of the 50S ribosomal subunit.</text>
</comment>
<comment type="similarity">
    <text evidence="1">Belongs to the universal ribosomal protein uL30 family.</text>
</comment>
<dbReference type="EMBL" id="CP000142">
    <property type="protein sequence ID" value="ABA87978.1"/>
    <property type="molecule type" value="Genomic_DNA"/>
</dbReference>
<dbReference type="RefSeq" id="WP_011340421.1">
    <property type="nucleotide sequence ID" value="NC_007498.2"/>
</dbReference>
<dbReference type="SMR" id="Q3A6M9"/>
<dbReference type="STRING" id="338963.Pcar_0719"/>
<dbReference type="KEGG" id="pca:Pcar_0719"/>
<dbReference type="eggNOG" id="COG1841">
    <property type="taxonomic scope" value="Bacteria"/>
</dbReference>
<dbReference type="HOGENOM" id="CLU_131047_2_1_7"/>
<dbReference type="Proteomes" id="UP000002534">
    <property type="component" value="Chromosome"/>
</dbReference>
<dbReference type="GO" id="GO:0022625">
    <property type="term" value="C:cytosolic large ribosomal subunit"/>
    <property type="evidence" value="ECO:0007669"/>
    <property type="project" value="TreeGrafter"/>
</dbReference>
<dbReference type="GO" id="GO:0003735">
    <property type="term" value="F:structural constituent of ribosome"/>
    <property type="evidence" value="ECO:0007669"/>
    <property type="project" value="InterPro"/>
</dbReference>
<dbReference type="GO" id="GO:0006412">
    <property type="term" value="P:translation"/>
    <property type="evidence" value="ECO:0007669"/>
    <property type="project" value="InterPro"/>
</dbReference>
<dbReference type="CDD" id="cd01658">
    <property type="entry name" value="Ribosomal_L30"/>
    <property type="match status" value="1"/>
</dbReference>
<dbReference type="Gene3D" id="3.30.1390.20">
    <property type="entry name" value="Ribosomal protein L30, ferredoxin-like fold domain"/>
    <property type="match status" value="1"/>
</dbReference>
<dbReference type="HAMAP" id="MF_01371_B">
    <property type="entry name" value="Ribosomal_uL30_B"/>
    <property type="match status" value="1"/>
</dbReference>
<dbReference type="InterPro" id="IPR036919">
    <property type="entry name" value="Ribo_uL30_ferredoxin-like_sf"/>
</dbReference>
<dbReference type="InterPro" id="IPR005996">
    <property type="entry name" value="Ribosomal_uL30_bac-type"/>
</dbReference>
<dbReference type="InterPro" id="IPR016082">
    <property type="entry name" value="Ribosomal_uL30_ferredoxin-like"/>
</dbReference>
<dbReference type="NCBIfam" id="TIGR01308">
    <property type="entry name" value="rpmD_bact"/>
    <property type="match status" value="1"/>
</dbReference>
<dbReference type="PANTHER" id="PTHR15892:SF2">
    <property type="entry name" value="LARGE RIBOSOMAL SUBUNIT PROTEIN UL30M"/>
    <property type="match status" value="1"/>
</dbReference>
<dbReference type="PANTHER" id="PTHR15892">
    <property type="entry name" value="MITOCHONDRIAL RIBOSOMAL PROTEIN L30"/>
    <property type="match status" value="1"/>
</dbReference>
<dbReference type="Pfam" id="PF00327">
    <property type="entry name" value="Ribosomal_L30"/>
    <property type="match status" value="1"/>
</dbReference>
<dbReference type="PIRSF" id="PIRSF002211">
    <property type="entry name" value="Ribosomal_L30_bac-type"/>
    <property type="match status" value="1"/>
</dbReference>
<dbReference type="SUPFAM" id="SSF55129">
    <property type="entry name" value="Ribosomal protein L30p/L7e"/>
    <property type="match status" value="1"/>
</dbReference>
<feature type="chain" id="PRO_1000056088" description="Large ribosomal subunit protein uL30">
    <location>
        <begin position="1"/>
        <end position="59"/>
    </location>
</feature>
<protein>
    <recommendedName>
        <fullName evidence="1">Large ribosomal subunit protein uL30</fullName>
    </recommendedName>
    <alternativeName>
        <fullName evidence="2">50S ribosomal protein L30</fullName>
    </alternativeName>
</protein>
<evidence type="ECO:0000255" key="1">
    <source>
        <dbReference type="HAMAP-Rule" id="MF_01371"/>
    </source>
</evidence>
<evidence type="ECO:0000305" key="2"/>
<accession>Q3A6M9</accession>
<keyword id="KW-1185">Reference proteome</keyword>
<keyword id="KW-0687">Ribonucleoprotein</keyword>
<keyword id="KW-0689">Ribosomal protein</keyword>
<sequence length="59" mass="6580">MAGQIKVTLKKSGIGRKEYFTKVLKGLGLTKLHKTVVLTDTPEIRGMIRKVSHMVVVED</sequence>
<organism>
    <name type="scientific">Syntrophotalea carbinolica (strain DSM 2380 / NBRC 103641 / GraBd1)</name>
    <name type="common">Pelobacter carbinolicus</name>
    <dbReference type="NCBI Taxonomy" id="338963"/>
    <lineage>
        <taxon>Bacteria</taxon>
        <taxon>Pseudomonadati</taxon>
        <taxon>Thermodesulfobacteriota</taxon>
        <taxon>Desulfuromonadia</taxon>
        <taxon>Desulfuromonadales</taxon>
        <taxon>Syntrophotaleaceae</taxon>
        <taxon>Syntrophotalea</taxon>
    </lineage>
</organism>
<gene>
    <name evidence="1" type="primary">rpmD</name>
    <name type="ordered locus">Pcar_0719</name>
</gene>